<dbReference type="FunCoup" id="Q9PRP6">
    <property type="interactions" value="5"/>
</dbReference>
<dbReference type="STRING" id="9031.ENSGALP00000069603"/>
<dbReference type="PaxDb" id="9031-ENSGALP00000034399"/>
<dbReference type="eggNOG" id="ENOG502SS7F">
    <property type="taxonomic scope" value="Eukaryota"/>
</dbReference>
<dbReference type="HOGENOM" id="CLU_154278_0_0_1"/>
<dbReference type="InParanoid" id="Q9PRP6"/>
<dbReference type="OrthoDB" id="9937685at2759"/>
<dbReference type="Proteomes" id="UP000000539">
    <property type="component" value="Unassembled WGS sequence"/>
</dbReference>
<dbReference type="GO" id="GO:0005576">
    <property type="term" value="C:extracellular region"/>
    <property type="evidence" value="ECO:0007669"/>
    <property type="project" value="UniProtKB-SubCell"/>
</dbReference>
<dbReference type="GO" id="GO:0005179">
    <property type="term" value="F:hormone activity"/>
    <property type="evidence" value="ECO:0007669"/>
    <property type="project" value="UniProtKB-KW"/>
</dbReference>
<dbReference type="GO" id="GO:0006939">
    <property type="term" value="P:smooth muscle contraction"/>
    <property type="evidence" value="ECO:0000314"/>
    <property type="project" value="AgBase"/>
</dbReference>
<dbReference type="InterPro" id="IPR006738">
    <property type="entry name" value="Motilin_ghrelin"/>
</dbReference>
<dbReference type="Pfam" id="PF04644">
    <property type="entry name" value="Motilin_ghrelin"/>
    <property type="match status" value="1"/>
</dbReference>
<evidence type="ECO:0000256" key="1">
    <source>
        <dbReference type="SAM" id="MobiDB-lite"/>
    </source>
</evidence>
<evidence type="ECO:0000305" key="2"/>
<comment type="function">
    <text>Plays an important role in the regulation of interdigestive gastrointestinal motility and indirectly causes rhythmic contraction of duodenal and colonic smooth muscle.</text>
</comment>
<comment type="subcellular location">
    <subcellularLocation>
        <location>Secreted</location>
    </subcellularLocation>
</comment>
<comment type="similarity">
    <text evidence="2">Belongs to the motilin family.</text>
</comment>
<reference key="1">
    <citation type="journal article" date="1996" name="Peptides">
        <title>Isolation, sequence, and bioactivity of chicken motilin.</title>
        <authorList>
            <person name="De Clercq P."/>
            <person name="Depoortere I."/>
            <person name="Macielag M."/>
            <person name="Vandermeers A."/>
            <person name="Vandermeers-Piret M.C."/>
            <person name="Peeters T.L."/>
        </authorList>
    </citation>
    <scope>PROTEIN SEQUENCE</scope>
    <source>
        <tissue>Small intestine</tissue>
    </source>
</reference>
<name>MOTI_CHICK</name>
<feature type="peptide" id="PRO_0000044066" description="Motilin">
    <location>
        <begin position="1"/>
        <end position="22"/>
    </location>
</feature>
<feature type="region of interest" description="Disordered" evidence="1">
    <location>
        <begin position="1"/>
        <end position="22"/>
    </location>
</feature>
<feature type="compositionally biased region" description="Polar residues" evidence="1">
    <location>
        <begin position="1"/>
        <end position="11"/>
    </location>
</feature>
<feature type="compositionally biased region" description="Basic and acidic residues" evidence="1">
    <location>
        <begin position="12"/>
        <end position="22"/>
    </location>
</feature>
<accession>Q9PRP6</accession>
<keyword id="KW-0903">Direct protein sequencing</keyword>
<keyword id="KW-0372">Hormone</keyword>
<keyword id="KW-1185">Reference proteome</keyword>
<keyword id="KW-0964">Secreted</keyword>
<gene>
    <name type="primary">MLN</name>
</gene>
<sequence length="22" mass="2686">FVPFFTQSDIQKMQEKERNKGQ</sequence>
<protein>
    <recommendedName>
        <fullName>Motilin</fullName>
    </recommendedName>
</protein>
<organism>
    <name type="scientific">Gallus gallus</name>
    <name type="common">Chicken</name>
    <dbReference type="NCBI Taxonomy" id="9031"/>
    <lineage>
        <taxon>Eukaryota</taxon>
        <taxon>Metazoa</taxon>
        <taxon>Chordata</taxon>
        <taxon>Craniata</taxon>
        <taxon>Vertebrata</taxon>
        <taxon>Euteleostomi</taxon>
        <taxon>Archelosauria</taxon>
        <taxon>Archosauria</taxon>
        <taxon>Dinosauria</taxon>
        <taxon>Saurischia</taxon>
        <taxon>Theropoda</taxon>
        <taxon>Coelurosauria</taxon>
        <taxon>Aves</taxon>
        <taxon>Neognathae</taxon>
        <taxon>Galloanserae</taxon>
        <taxon>Galliformes</taxon>
        <taxon>Phasianidae</taxon>
        <taxon>Phasianinae</taxon>
        <taxon>Gallus</taxon>
    </lineage>
</organism>
<proteinExistence type="evidence at protein level"/>